<organism>
    <name type="scientific">Neurospora crassa (strain ATCC 24698 / 74-OR23-1A / CBS 708.71 / DSM 1257 / FGSC 987)</name>
    <dbReference type="NCBI Taxonomy" id="367110"/>
    <lineage>
        <taxon>Eukaryota</taxon>
        <taxon>Fungi</taxon>
        <taxon>Dikarya</taxon>
        <taxon>Ascomycota</taxon>
        <taxon>Pezizomycotina</taxon>
        <taxon>Sordariomycetes</taxon>
        <taxon>Sordariomycetidae</taxon>
        <taxon>Sordariales</taxon>
        <taxon>Sordariaceae</taxon>
        <taxon>Neurospora</taxon>
    </lineage>
</organism>
<feature type="chain" id="PRO_0000422971" description="Cystathionine beta-lyase">
    <location>
        <begin position="1"/>
        <end position="457"/>
    </location>
</feature>
<feature type="region of interest" description="Disordered" evidence="2">
    <location>
        <begin position="1"/>
        <end position="41"/>
    </location>
</feature>
<proteinExistence type="evidence at protein level"/>
<keyword id="KW-0028">Amino-acid biosynthesis</keyword>
<keyword id="KW-0963">Cytoplasm</keyword>
<keyword id="KW-0456">Lyase</keyword>
<keyword id="KW-0486">Methionine biosynthesis</keyword>
<keyword id="KW-0539">Nucleus</keyword>
<keyword id="KW-0663">Pyridoxal phosphate</keyword>
<keyword id="KW-1185">Reference proteome</keyword>
<protein>
    <recommendedName>
        <fullName>Cystathionine beta-lyase</fullName>
        <ecNumber evidence="3">4.4.1.13</ecNumber>
    </recommendedName>
    <alternativeName>
        <fullName>Cysteine-S-conjugate beta-lyase</fullName>
    </alternativeName>
</protein>
<name>CBL_NEUCR</name>
<gene>
    <name type="primary">met-2</name>
    <name type="ORF">NCU07987.1</name>
</gene>
<sequence length="457" mass="49160">MSTPNSDSPAAQAAKKVFSRLDLDGHNLPPSPAPSSPHNGRRYALATELVYTETKDQYGASSIPIYQSATFKQSSSNGGSEYDYTRSGNPTRTHLERHLAKIMNANRCLSVSSGMGALDVITRLLKPGDEVITGDDLYGGTNRLLTYLKNNQGVIVHHVDTTNVESVRQIISPKTTMVLLETPTNPLIKICDIPTIARITHEANEKAVVVVDNTMLSPMLFNPLDVGADIVYESGTKYLSGHHDIMAGVIAVNDTELGDKLYFTINATGCGLSPNDSFLLMRGVKTLAIRMEKQQANAQRIAEFLESHGFKVRYPGLKSHPQYDLHWSMARGAGAVLSFETGDVALSERIVEAARLWGISVSFGCVNSLISMPCRMSHASIDAKTRAERQMPEDIIRLCVGIEDADDLIDDLSRALVQAGAVTLTVDGFHANTAEGAAAAAAGSEAAETTTTAAPSL</sequence>
<comment type="function">
    <text evidence="3">Involved in de novo synthesis of methionine.</text>
</comment>
<comment type="catalytic activity">
    <reaction evidence="3">
        <text>L,L-cystathionine + H2O = L-homocysteine + pyruvate + NH4(+)</text>
        <dbReference type="Rhea" id="RHEA:13965"/>
        <dbReference type="ChEBI" id="CHEBI:15361"/>
        <dbReference type="ChEBI" id="CHEBI:15377"/>
        <dbReference type="ChEBI" id="CHEBI:28938"/>
        <dbReference type="ChEBI" id="CHEBI:58161"/>
        <dbReference type="ChEBI" id="CHEBI:58199"/>
    </reaction>
</comment>
<comment type="catalytic activity">
    <reaction evidence="3">
        <text>an S-substituted L-cysteine + H2O = a thiol + pyruvate + NH4(+)</text>
        <dbReference type="Rhea" id="RHEA:18121"/>
        <dbReference type="ChEBI" id="CHEBI:15361"/>
        <dbReference type="ChEBI" id="CHEBI:15377"/>
        <dbReference type="ChEBI" id="CHEBI:28938"/>
        <dbReference type="ChEBI" id="CHEBI:29256"/>
        <dbReference type="ChEBI" id="CHEBI:58717"/>
        <dbReference type="EC" id="4.4.1.13"/>
    </reaction>
</comment>
<comment type="cofactor">
    <cofactor evidence="1">
        <name>pyridoxal 5'-phosphate</name>
        <dbReference type="ChEBI" id="CHEBI:597326"/>
    </cofactor>
</comment>
<comment type="pathway">
    <text>Amino-acid biosynthesis; L-methionine biosynthesis via de novo pathway; L-homocysteine from L-cystathionine: step 1/1.</text>
</comment>
<comment type="subcellular location">
    <subcellularLocation>
        <location evidence="1">Cytoplasm</location>
    </subcellularLocation>
    <subcellularLocation>
        <location evidence="1">Nucleus</location>
    </subcellularLocation>
</comment>
<comment type="similarity">
    <text evidence="4">Belongs to the trans-sulfuration enzymes family.</text>
</comment>
<reference key="1">
    <citation type="journal article" date="2001" name="Fungal Genet. Newsl.">
        <title>Molecular cloning and regulatory analysis of the cystathionine beta- and gamma-lyase genes of Neurospora crassa.</title>
        <authorList>
            <person name="Reveal B.S."/>
            <person name="Paietta J.V."/>
        </authorList>
    </citation>
    <scope>NUCLEOTIDE SEQUENCE [GENOMIC DNA]</scope>
</reference>
<reference key="2">
    <citation type="journal article" date="2003" name="Nature">
        <title>The genome sequence of the filamentous fungus Neurospora crassa.</title>
        <authorList>
            <person name="Galagan J.E."/>
            <person name="Calvo S.E."/>
            <person name="Borkovich K.A."/>
            <person name="Selker E.U."/>
            <person name="Read N.D."/>
            <person name="Jaffe D.B."/>
            <person name="FitzHugh W."/>
            <person name="Ma L.-J."/>
            <person name="Smirnov S."/>
            <person name="Purcell S."/>
            <person name="Rehman B."/>
            <person name="Elkins T."/>
            <person name="Engels R."/>
            <person name="Wang S."/>
            <person name="Nielsen C.B."/>
            <person name="Butler J."/>
            <person name="Endrizzi M."/>
            <person name="Qui D."/>
            <person name="Ianakiev P."/>
            <person name="Bell-Pedersen D."/>
            <person name="Nelson M.A."/>
            <person name="Werner-Washburne M."/>
            <person name="Selitrennikoff C.P."/>
            <person name="Kinsey J.A."/>
            <person name="Braun E.L."/>
            <person name="Zelter A."/>
            <person name="Schulte U."/>
            <person name="Kothe G.O."/>
            <person name="Jedd G."/>
            <person name="Mewes H.-W."/>
            <person name="Staben C."/>
            <person name="Marcotte E."/>
            <person name="Greenberg D."/>
            <person name="Roy A."/>
            <person name="Foley K."/>
            <person name="Naylor J."/>
            <person name="Stange-Thomann N."/>
            <person name="Barrett R."/>
            <person name="Gnerre S."/>
            <person name="Kamal M."/>
            <person name="Kamvysselis M."/>
            <person name="Mauceli E.W."/>
            <person name="Bielke C."/>
            <person name="Rudd S."/>
            <person name="Frishman D."/>
            <person name="Krystofova S."/>
            <person name="Rasmussen C."/>
            <person name="Metzenberg R.L."/>
            <person name="Perkins D.D."/>
            <person name="Kroken S."/>
            <person name="Cogoni C."/>
            <person name="Macino G."/>
            <person name="Catcheside D.E.A."/>
            <person name="Li W."/>
            <person name="Pratt R.J."/>
            <person name="Osmani S.A."/>
            <person name="DeSouza C.P.C."/>
            <person name="Glass N.L."/>
            <person name="Orbach M.J."/>
            <person name="Berglund J.A."/>
            <person name="Voelker R."/>
            <person name="Yarden O."/>
            <person name="Plamann M."/>
            <person name="Seiler S."/>
            <person name="Dunlap J.C."/>
            <person name="Radford A."/>
            <person name="Aramayo R."/>
            <person name="Natvig D.O."/>
            <person name="Alex L.A."/>
            <person name="Mannhaupt G."/>
            <person name="Ebbole D.J."/>
            <person name="Freitag M."/>
            <person name="Paulsen I."/>
            <person name="Sachs M.S."/>
            <person name="Lander E.S."/>
            <person name="Nusbaum C."/>
            <person name="Birren B.W."/>
        </authorList>
    </citation>
    <scope>NUCLEOTIDE SEQUENCE [LARGE SCALE GENOMIC DNA]</scope>
    <source>
        <strain>ATCC 24698 / 74-OR23-1A / CBS 708.71 / DSM 1257 / FGSC 987</strain>
    </source>
</reference>
<reference key="3">
    <citation type="journal article" date="1964" name="J. Biol. Chem.">
        <title>Cystathionine cleavage enzymes of Neurospora.</title>
        <authorList>
            <person name="Flavin M."/>
            <person name="Slaughter C."/>
        </authorList>
    </citation>
    <scope>FUNCTION</scope>
    <scope>CATALYTIC ACTIVITY</scope>
</reference>
<dbReference type="EC" id="4.4.1.13" evidence="3"/>
<dbReference type="EMBL" id="AF401237">
    <property type="protein sequence ID" value="AAK94039.1"/>
    <property type="molecule type" value="Genomic_DNA"/>
</dbReference>
<dbReference type="EMBL" id="CM002239">
    <property type="protein sequence ID" value="EAA33421.1"/>
    <property type="molecule type" value="Genomic_DNA"/>
</dbReference>
<dbReference type="RefSeq" id="XP_962657.1">
    <property type="nucleotide sequence ID" value="XM_957564.3"/>
</dbReference>
<dbReference type="SMR" id="Q1K8G0"/>
<dbReference type="FunCoup" id="Q1K8G0">
    <property type="interactions" value="131"/>
</dbReference>
<dbReference type="STRING" id="367110.Q1K8G0"/>
<dbReference type="PaxDb" id="5141-EFNCRP00000008300"/>
<dbReference type="EnsemblFungi" id="EAA33421">
    <property type="protein sequence ID" value="EAA33421"/>
    <property type="gene ID" value="NCU07987"/>
</dbReference>
<dbReference type="KEGG" id="ncr:NCU07987"/>
<dbReference type="VEuPathDB" id="FungiDB:NCU07987"/>
<dbReference type="HOGENOM" id="CLU_018986_2_1_1"/>
<dbReference type="InParanoid" id="Q1K8G0"/>
<dbReference type="OMA" id="NCIGATG"/>
<dbReference type="OrthoDB" id="2545919at2759"/>
<dbReference type="BRENDA" id="4.4.1.13">
    <property type="organism ID" value="3627"/>
</dbReference>
<dbReference type="UniPathway" id="UPA00051">
    <property type="reaction ID" value="UER00078"/>
</dbReference>
<dbReference type="Proteomes" id="UP000001805">
    <property type="component" value="Chromosome 4, Linkage Group IV"/>
</dbReference>
<dbReference type="GO" id="GO:0005737">
    <property type="term" value="C:cytoplasm"/>
    <property type="evidence" value="ECO:0000318"/>
    <property type="project" value="GO_Central"/>
</dbReference>
<dbReference type="GO" id="GO:0005634">
    <property type="term" value="C:nucleus"/>
    <property type="evidence" value="ECO:0007669"/>
    <property type="project" value="UniProtKB-SubCell"/>
</dbReference>
<dbReference type="GO" id="GO:0016846">
    <property type="term" value="F:carbon-sulfur lyase activity"/>
    <property type="evidence" value="ECO:0000318"/>
    <property type="project" value="GO_Central"/>
</dbReference>
<dbReference type="GO" id="GO:0047804">
    <property type="term" value="F:cysteine-S-conjugate beta-lyase activity"/>
    <property type="evidence" value="ECO:0007669"/>
    <property type="project" value="UniProtKB-EC"/>
</dbReference>
<dbReference type="GO" id="GO:0030170">
    <property type="term" value="F:pyridoxal phosphate binding"/>
    <property type="evidence" value="ECO:0000318"/>
    <property type="project" value="GO_Central"/>
</dbReference>
<dbReference type="GO" id="GO:0071266">
    <property type="term" value="P:'de novo' L-methionine biosynthetic process"/>
    <property type="evidence" value="ECO:0007669"/>
    <property type="project" value="InterPro"/>
</dbReference>
<dbReference type="GO" id="GO:0019346">
    <property type="term" value="P:transsulfuration"/>
    <property type="evidence" value="ECO:0000318"/>
    <property type="project" value="GO_Central"/>
</dbReference>
<dbReference type="CDD" id="cd00614">
    <property type="entry name" value="CGS_like"/>
    <property type="match status" value="1"/>
</dbReference>
<dbReference type="FunFam" id="3.90.1150.10:FF:000013">
    <property type="entry name" value="Cystathionine beta-lyase"/>
    <property type="match status" value="1"/>
</dbReference>
<dbReference type="FunFam" id="3.40.640.10:FF:000009">
    <property type="entry name" value="Cystathionine gamma-synthase homolog"/>
    <property type="match status" value="1"/>
</dbReference>
<dbReference type="Gene3D" id="3.90.1150.10">
    <property type="entry name" value="Aspartate Aminotransferase, domain 1"/>
    <property type="match status" value="1"/>
</dbReference>
<dbReference type="Gene3D" id="3.40.640.10">
    <property type="entry name" value="Type I PLP-dependent aspartate aminotransferase-like (Major domain)"/>
    <property type="match status" value="1"/>
</dbReference>
<dbReference type="InterPro" id="IPR000277">
    <property type="entry name" value="Cys/Met-Metab_PyrdxlP-dep_enz"/>
</dbReference>
<dbReference type="InterPro" id="IPR006238">
    <property type="entry name" value="Cys_b_lyase_euk"/>
</dbReference>
<dbReference type="InterPro" id="IPR054542">
    <property type="entry name" value="Cys_met_metab_PP"/>
</dbReference>
<dbReference type="InterPro" id="IPR015424">
    <property type="entry name" value="PyrdxlP-dep_Trfase"/>
</dbReference>
<dbReference type="InterPro" id="IPR015421">
    <property type="entry name" value="PyrdxlP-dep_Trfase_major"/>
</dbReference>
<dbReference type="InterPro" id="IPR015422">
    <property type="entry name" value="PyrdxlP-dep_Trfase_small"/>
</dbReference>
<dbReference type="NCBIfam" id="TIGR01329">
    <property type="entry name" value="cysta_beta_ly_E"/>
    <property type="match status" value="1"/>
</dbReference>
<dbReference type="PANTHER" id="PTHR11808:SF50">
    <property type="entry name" value="CYSTATHIONINE BETA-LYASE"/>
    <property type="match status" value="1"/>
</dbReference>
<dbReference type="PANTHER" id="PTHR11808">
    <property type="entry name" value="TRANS-SULFURATION ENZYME FAMILY MEMBER"/>
    <property type="match status" value="1"/>
</dbReference>
<dbReference type="Pfam" id="PF01053">
    <property type="entry name" value="Cys_Met_Meta_PP"/>
    <property type="match status" value="1"/>
</dbReference>
<dbReference type="PIRSF" id="PIRSF001434">
    <property type="entry name" value="CGS"/>
    <property type="match status" value="1"/>
</dbReference>
<dbReference type="SUPFAM" id="SSF53383">
    <property type="entry name" value="PLP-dependent transferases"/>
    <property type="match status" value="1"/>
</dbReference>
<dbReference type="PROSITE" id="PS00868">
    <property type="entry name" value="CYS_MET_METAB_PP"/>
    <property type="match status" value="1"/>
</dbReference>
<evidence type="ECO:0000250" key="1"/>
<evidence type="ECO:0000256" key="2">
    <source>
        <dbReference type="SAM" id="MobiDB-lite"/>
    </source>
</evidence>
<evidence type="ECO:0000269" key="3">
    <source>
    </source>
</evidence>
<evidence type="ECO:0000305" key="4"/>
<accession>Q1K8G0</accession>
<accession>Q96VU8</accession>